<feature type="chain" id="PRO_0000063041" description="Protein CfxQ homolog">
    <location>
        <begin position="1"/>
        <end position="291"/>
    </location>
</feature>
<feature type="binding site" evidence="2">
    <location>
        <begin position="71"/>
        <end position="78"/>
    </location>
    <ligand>
        <name>ATP</name>
        <dbReference type="ChEBI" id="CHEBI:30616"/>
    </ligand>
</feature>
<reference key="1">
    <citation type="journal article" date="1995" name="Plant Mol. Biol. Rep.">
        <title>The chloroplast genome of a chlorophyll a+c-containing alga, Odontella sinensis.</title>
        <authorList>
            <person name="Kowallik K.V."/>
            <person name="Stoebe B."/>
            <person name="Schaffran I."/>
            <person name="Kroth-Pancic P."/>
            <person name="Freier U."/>
        </authorList>
    </citation>
    <scope>NUCLEOTIDE SEQUENCE [LARGE SCALE GENOMIC DNA]</scope>
</reference>
<dbReference type="EMBL" id="Z67753">
    <property type="protein sequence ID" value="CAA91706.1"/>
    <property type="molecule type" value="Genomic_DNA"/>
</dbReference>
<dbReference type="PIR" id="S78333">
    <property type="entry name" value="S78333"/>
</dbReference>
<dbReference type="SMR" id="P49826"/>
<dbReference type="GO" id="GO:0009507">
    <property type="term" value="C:chloroplast"/>
    <property type="evidence" value="ECO:0007669"/>
    <property type="project" value="UniProtKB-SubCell"/>
</dbReference>
<dbReference type="GO" id="GO:0005524">
    <property type="term" value="F:ATP binding"/>
    <property type="evidence" value="ECO:0007669"/>
    <property type="project" value="UniProtKB-KW"/>
</dbReference>
<dbReference type="GO" id="GO:0016887">
    <property type="term" value="F:ATP hydrolysis activity"/>
    <property type="evidence" value="ECO:0007669"/>
    <property type="project" value="InterPro"/>
</dbReference>
<dbReference type="CDD" id="cd00009">
    <property type="entry name" value="AAA"/>
    <property type="match status" value="1"/>
</dbReference>
<dbReference type="FunFam" id="1.10.8.60:FF:000214">
    <property type="entry name" value="CbbX protein"/>
    <property type="match status" value="1"/>
</dbReference>
<dbReference type="FunFam" id="3.40.50.300:FF:000216">
    <property type="entry name" value="Type VII secretion ATPase EccA"/>
    <property type="match status" value="1"/>
</dbReference>
<dbReference type="Gene3D" id="1.10.8.60">
    <property type="match status" value="1"/>
</dbReference>
<dbReference type="Gene3D" id="3.40.50.300">
    <property type="entry name" value="P-loop containing nucleotide triphosphate hydrolases"/>
    <property type="match status" value="1"/>
</dbReference>
<dbReference type="InterPro" id="IPR003593">
    <property type="entry name" value="AAA+_ATPase"/>
</dbReference>
<dbReference type="InterPro" id="IPR041627">
    <property type="entry name" value="AAA_lid_6"/>
</dbReference>
<dbReference type="InterPro" id="IPR003959">
    <property type="entry name" value="ATPase_AAA_core"/>
</dbReference>
<dbReference type="InterPro" id="IPR000470">
    <property type="entry name" value="CbxX/CfqX_mono"/>
</dbReference>
<dbReference type="InterPro" id="IPR000641">
    <property type="entry name" value="CbxX/CfxQ"/>
</dbReference>
<dbReference type="InterPro" id="IPR050773">
    <property type="entry name" value="CbxX/CfxQ_RuBisCO_ESX"/>
</dbReference>
<dbReference type="InterPro" id="IPR027417">
    <property type="entry name" value="P-loop_NTPase"/>
</dbReference>
<dbReference type="NCBIfam" id="TIGR02880">
    <property type="entry name" value="cbbX_cfxQ"/>
    <property type="match status" value="1"/>
</dbReference>
<dbReference type="PANTHER" id="PTHR43392">
    <property type="entry name" value="AAA-TYPE ATPASE FAMILY PROTEIN / ANKYRIN REPEAT FAMILY PROTEIN"/>
    <property type="match status" value="1"/>
</dbReference>
<dbReference type="PANTHER" id="PTHR43392:SF2">
    <property type="entry name" value="AAA-TYPE ATPASE FAMILY PROTEIN _ ANKYRIN REPEAT FAMILY PROTEIN"/>
    <property type="match status" value="1"/>
</dbReference>
<dbReference type="Pfam" id="PF00004">
    <property type="entry name" value="AAA"/>
    <property type="match status" value="1"/>
</dbReference>
<dbReference type="Pfam" id="PF17866">
    <property type="entry name" value="AAA_lid_6"/>
    <property type="match status" value="1"/>
</dbReference>
<dbReference type="PRINTS" id="PR00819">
    <property type="entry name" value="CBXCFQXSUPER"/>
</dbReference>
<dbReference type="PRINTS" id="PR00820">
    <property type="entry name" value="CBXXCFQX"/>
</dbReference>
<dbReference type="SMART" id="SM00382">
    <property type="entry name" value="AAA"/>
    <property type="match status" value="1"/>
</dbReference>
<dbReference type="SUPFAM" id="SSF52540">
    <property type="entry name" value="P-loop containing nucleoside triphosphate hydrolases"/>
    <property type="match status" value="1"/>
</dbReference>
<name>CFXQ_TRICV</name>
<gene>
    <name type="primary">cfxQ</name>
</gene>
<accession>P49826</accession>
<organism>
    <name type="scientific">Trieres chinensis</name>
    <name type="common">Marine centric diatom</name>
    <name type="synonym">Odontella sinensis</name>
    <dbReference type="NCBI Taxonomy" id="1514140"/>
    <lineage>
        <taxon>Eukaryota</taxon>
        <taxon>Sar</taxon>
        <taxon>Stramenopiles</taxon>
        <taxon>Ochrophyta</taxon>
        <taxon>Bacillariophyta</taxon>
        <taxon>Mediophyceae</taxon>
        <taxon>Biddulphiophycidae</taxon>
        <taxon>Eupodiscales</taxon>
        <taxon>Parodontellaceae</taxon>
        <taxon>Trieres</taxon>
    </lineage>
</organism>
<geneLocation type="chloroplast"/>
<evidence type="ECO:0000250" key="1"/>
<evidence type="ECO:0000255" key="2"/>
<evidence type="ECO:0000305" key="3"/>
<sequence length="291" mass="32865">MSSMDTSVNLQEEYNKTEIAKILNLLNEELVGLVPVKSRIREIAALLLIDKLRKNLGITAGSPGLHMSFTGSPGTGKTTVGLKMSDILFQLGYIKKGHLLTVTRDDLVGQYIGHTAPKTKEVLKKAMGGVLFIDEAYYLYKPDNERDYGSEAIEILLQVMENQRDDLVVILAGYKEPMDKFYESNPGLSSRIANHIDFPDYTVEELLKISKMMLEEQQYQLTTQAEVALTQYIAKRKEKPLFANARSVKNALDRARMRQANRIFDSRGQILTKKELVNIEAEDILQSTIFD</sequence>
<proteinExistence type="inferred from homology"/>
<protein>
    <recommendedName>
        <fullName>Protein CfxQ homolog</fullName>
    </recommendedName>
</protein>
<keyword id="KW-0067">ATP-binding</keyword>
<keyword id="KW-0150">Chloroplast</keyword>
<keyword id="KW-0547">Nucleotide-binding</keyword>
<keyword id="KW-0934">Plastid</keyword>
<comment type="function">
    <text evidence="1">Necessary for the expression of RuBisCO.</text>
</comment>
<comment type="subcellular location">
    <subcellularLocation>
        <location>Plastid</location>
        <location>Chloroplast</location>
    </subcellularLocation>
</comment>
<comment type="similarity">
    <text evidence="3">Belongs to the CbxX/CfxQ family.</text>
</comment>